<accession>A5WCB3</accession>
<sequence>MLIEFTKMHGLGNDFMVIDLVTQRLELTPELITLLADRNLGIGFDQLLVVEPPMRPDVDFRYRIFNSDGSEVEQCGNGARCFARFVQARKLSFKQRIRVETKSGILTLSTDNYGWVEVDMGKPRFEPAEIPFTPKAITKIQNAYHLDVEGTPVQLYVANMGNPHAVIKVDDILTADVEKLGKAIESHPAFPERVNVGFMQVMNQRHIRLRVYERGVGETQACGTGACAAVATGIREGWLDEGEEIRAQLYGGSLLIRWSPGYSVMMTGPTAFVYEGVFSPDGIMAQAGLKPLS</sequence>
<dbReference type="EC" id="5.1.1.7" evidence="1"/>
<dbReference type="EMBL" id="CP000713">
    <property type="protein sequence ID" value="ABQ93304.1"/>
    <property type="molecule type" value="Genomic_DNA"/>
</dbReference>
<dbReference type="SMR" id="A5WCB3"/>
<dbReference type="STRING" id="349106.PsycPRwf_0349"/>
<dbReference type="KEGG" id="prw:PsycPRwf_0349"/>
<dbReference type="eggNOG" id="COG0253">
    <property type="taxonomic scope" value="Bacteria"/>
</dbReference>
<dbReference type="HOGENOM" id="CLU_053306_1_1_6"/>
<dbReference type="UniPathway" id="UPA00034">
    <property type="reaction ID" value="UER00025"/>
</dbReference>
<dbReference type="GO" id="GO:0005829">
    <property type="term" value="C:cytosol"/>
    <property type="evidence" value="ECO:0007669"/>
    <property type="project" value="TreeGrafter"/>
</dbReference>
<dbReference type="GO" id="GO:0008837">
    <property type="term" value="F:diaminopimelate epimerase activity"/>
    <property type="evidence" value="ECO:0007669"/>
    <property type="project" value="UniProtKB-UniRule"/>
</dbReference>
<dbReference type="GO" id="GO:0009089">
    <property type="term" value="P:lysine biosynthetic process via diaminopimelate"/>
    <property type="evidence" value="ECO:0007669"/>
    <property type="project" value="UniProtKB-UniRule"/>
</dbReference>
<dbReference type="FunFam" id="3.10.310.10:FF:000001">
    <property type="entry name" value="Diaminopimelate epimerase"/>
    <property type="match status" value="1"/>
</dbReference>
<dbReference type="FunFam" id="3.10.310.10:FF:000004">
    <property type="entry name" value="Diaminopimelate epimerase"/>
    <property type="match status" value="1"/>
</dbReference>
<dbReference type="Gene3D" id="3.10.310.10">
    <property type="entry name" value="Diaminopimelate Epimerase, Chain A, domain 1"/>
    <property type="match status" value="2"/>
</dbReference>
<dbReference type="HAMAP" id="MF_00197">
    <property type="entry name" value="DAP_epimerase"/>
    <property type="match status" value="1"/>
</dbReference>
<dbReference type="InterPro" id="IPR018510">
    <property type="entry name" value="DAP_epimerase_AS"/>
</dbReference>
<dbReference type="InterPro" id="IPR001653">
    <property type="entry name" value="DAP_epimerase_DapF"/>
</dbReference>
<dbReference type="NCBIfam" id="TIGR00652">
    <property type="entry name" value="DapF"/>
    <property type="match status" value="1"/>
</dbReference>
<dbReference type="PANTHER" id="PTHR31689:SF0">
    <property type="entry name" value="DIAMINOPIMELATE EPIMERASE"/>
    <property type="match status" value="1"/>
</dbReference>
<dbReference type="PANTHER" id="PTHR31689">
    <property type="entry name" value="DIAMINOPIMELATE EPIMERASE, CHLOROPLASTIC"/>
    <property type="match status" value="1"/>
</dbReference>
<dbReference type="Pfam" id="PF01678">
    <property type="entry name" value="DAP_epimerase"/>
    <property type="match status" value="2"/>
</dbReference>
<dbReference type="SUPFAM" id="SSF54506">
    <property type="entry name" value="Diaminopimelate epimerase-like"/>
    <property type="match status" value="1"/>
</dbReference>
<dbReference type="PROSITE" id="PS01326">
    <property type="entry name" value="DAP_EPIMERASE"/>
    <property type="match status" value="1"/>
</dbReference>
<proteinExistence type="inferred from homology"/>
<evidence type="ECO:0000255" key="1">
    <source>
        <dbReference type="HAMAP-Rule" id="MF_00197"/>
    </source>
</evidence>
<feature type="chain" id="PRO_1000071715" description="Diaminopimelate epimerase">
    <location>
        <begin position="1"/>
        <end position="293"/>
    </location>
</feature>
<feature type="active site" description="Proton donor" evidence="1">
    <location>
        <position position="75"/>
    </location>
</feature>
<feature type="active site" description="Proton acceptor" evidence="1">
    <location>
        <position position="222"/>
    </location>
</feature>
<feature type="binding site" evidence="1">
    <location>
        <position position="13"/>
    </location>
    <ligand>
        <name>substrate</name>
    </ligand>
</feature>
<feature type="binding site" evidence="1">
    <location>
        <position position="46"/>
    </location>
    <ligand>
        <name>substrate</name>
    </ligand>
</feature>
<feature type="binding site" evidence="1">
    <location>
        <position position="66"/>
    </location>
    <ligand>
        <name>substrate</name>
    </ligand>
</feature>
<feature type="binding site" evidence="1">
    <location>
        <begin position="76"/>
        <end position="77"/>
    </location>
    <ligand>
        <name>substrate</name>
    </ligand>
</feature>
<feature type="binding site" evidence="1">
    <location>
        <position position="162"/>
    </location>
    <ligand>
        <name>substrate</name>
    </ligand>
</feature>
<feature type="binding site" evidence="1">
    <location>
        <position position="195"/>
    </location>
    <ligand>
        <name>substrate</name>
    </ligand>
</feature>
<feature type="binding site" evidence="1">
    <location>
        <begin position="213"/>
        <end position="214"/>
    </location>
    <ligand>
        <name>substrate</name>
    </ligand>
</feature>
<feature type="binding site" evidence="1">
    <location>
        <begin position="223"/>
        <end position="224"/>
    </location>
    <ligand>
        <name>substrate</name>
    </ligand>
</feature>
<feature type="site" description="Could be important to modulate the pK values of the two catalytic cysteine residues" evidence="1">
    <location>
        <position position="164"/>
    </location>
</feature>
<feature type="site" description="Could be important to modulate the pK values of the two catalytic cysteine residues" evidence="1">
    <location>
        <position position="213"/>
    </location>
</feature>
<feature type="site" description="Important for dimerization" evidence="1">
    <location>
        <position position="274"/>
    </location>
</feature>
<name>DAPF_PSYWF</name>
<keyword id="KW-0028">Amino-acid biosynthesis</keyword>
<keyword id="KW-0963">Cytoplasm</keyword>
<keyword id="KW-0413">Isomerase</keyword>
<keyword id="KW-0457">Lysine biosynthesis</keyword>
<organism>
    <name type="scientific">Psychrobacter sp. (strain PRwf-1)</name>
    <dbReference type="NCBI Taxonomy" id="349106"/>
    <lineage>
        <taxon>Bacteria</taxon>
        <taxon>Pseudomonadati</taxon>
        <taxon>Pseudomonadota</taxon>
        <taxon>Gammaproteobacteria</taxon>
        <taxon>Moraxellales</taxon>
        <taxon>Moraxellaceae</taxon>
        <taxon>Psychrobacter</taxon>
    </lineage>
</organism>
<comment type="function">
    <text evidence="1">Catalyzes the stereoinversion of LL-2,6-diaminopimelate (L,L-DAP) to meso-diaminopimelate (meso-DAP), a precursor of L-lysine and an essential component of the bacterial peptidoglycan.</text>
</comment>
<comment type="catalytic activity">
    <reaction evidence="1">
        <text>(2S,6S)-2,6-diaminopimelate = meso-2,6-diaminopimelate</text>
        <dbReference type="Rhea" id="RHEA:15393"/>
        <dbReference type="ChEBI" id="CHEBI:57609"/>
        <dbReference type="ChEBI" id="CHEBI:57791"/>
        <dbReference type="EC" id="5.1.1.7"/>
    </reaction>
</comment>
<comment type="pathway">
    <text evidence="1">Amino-acid biosynthesis; L-lysine biosynthesis via DAP pathway; DL-2,6-diaminopimelate from LL-2,6-diaminopimelate: step 1/1.</text>
</comment>
<comment type="subunit">
    <text evidence="1">Homodimer.</text>
</comment>
<comment type="subcellular location">
    <subcellularLocation>
        <location evidence="1">Cytoplasm</location>
    </subcellularLocation>
</comment>
<comment type="similarity">
    <text evidence="1">Belongs to the diaminopimelate epimerase family.</text>
</comment>
<gene>
    <name evidence="1" type="primary">dapF</name>
    <name type="ordered locus">PsycPRwf_0349</name>
</gene>
<reference key="1">
    <citation type="submission" date="2007-05" db="EMBL/GenBank/DDBJ databases">
        <title>Complete sequence of chromosome of Psychrobacter sp. PRwf-1.</title>
        <authorList>
            <consortium name="US DOE Joint Genome Institute"/>
            <person name="Copeland A."/>
            <person name="Lucas S."/>
            <person name="Lapidus A."/>
            <person name="Barry K."/>
            <person name="Detter J.C."/>
            <person name="Glavina del Rio T."/>
            <person name="Hammon N."/>
            <person name="Israni S."/>
            <person name="Dalin E."/>
            <person name="Tice H."/>
            <person name="Pitluck S."/>
            <person name="Chain P."/>
            <person name="Malfatti S."/>
            <person name="Shin M."/>
            <person name="Vergez L."/>
            <person name="Schmutz J."/>
            <person name="Larimer F."/>
            <person name="Land M."/>
            <person name="Hauser L."/>
            <person name="Kyrpides N."/>
            <person name="Kim E."/>
            <person name="Tiedje J."/>
            <person name="Richardson P."/>
        </authorList>
    </citation>
    <scope>NUCLEOTIDE SEQUENCE [LARGE SCALE GENOMIC DNA]</scope>
    <source>
        <strain>PRwf-1</strain>
    </source>
</reference>
<protein>
    <recommendedName>
        <fullName evidence="1">Diaminopimelate epimerase</fullName>
        <shortName evidence="1">DAP epimerase</shortName>
        <ecNumber evidence="1">5.1.1.7</ecNumber>
    </recommendedName>
    <alternativeName>
        <fullName evidence="1">PLP-independent amino acid racemase</fullName>
    </alternativeName>
</protein>